<gene>
    <name type="primary">NDRG1</name>
</gene>
<protein>
    <recommendedName>
        <fullName>Protein NDRG1</fullName>
    </recommendedName>
    <alternativeName>
        <fullName>N-myc downstream-regulated gene 1 protein</fullName>
    </alternativeName>
</protein>
<organism>
    <name type="scientific">Bos taurus</name>
    <name type="common">Bovine</name>
    <dbReference type="NCBI Taxonomy" id="9913"/>
    <lineage>
        <taxon>Eukaryota</taxon>
        <taxon>Metazoa</taxon>
        <taxon>Chordata</taxon>
        <taxon>Craniata</taxon>
        <taxon>Vertebrata</taxon>
        <taxon>Euteleostomi</taxon>
        <taxon>Mammalia</taxon>
        <taxon>Eutheria</taxon>
        <taxon>Laurasiatheria</taxon>
        <taxon>Artiodactyla</taxon>
        <taxon>Ruminantia</taxon>
        <taxon>Pecora</taxon>
        <taxon>Bovidae</taxon>
        <taxon>Bovinae</taxon>
        <taxon>Bos</taxon>
    </lineage>
</organism>
<sequence length="384" mass="41627">MSRELQDVDLAEVKPLVEKGETITGLLQEFDVQEQDIETLHGSIHVTLCGTPKGNRPVILTYHDIGMNHKTCYNPLFNSEDMQEITQHFAVCHVDAPGQQDGAASFPTGYMYPSMDQLAEMLPGVLQQFGLKSIIGMGTGAGAYILTRFALNNPEMVEGLVLINVNPCAEGWMDWAASKISGWTQALPDMVVSHLFGKEEMQNNVEVVHAYRHHVMNDMNPGNLQLFINAYNGRRDLEIERPMPGAHTVTLQCPALLVVGDSSPAVDAVVECNSKLDPTKTTLLKMADCGGLPQISQPAKLAEAFKYFVQGMGYMPSASMTRLMRSRTASGSSVTSLEGARSRSHTSEGTRSRSHTSEGTRLDIIPNSGGPGSSAGPNSTEVSC</sequence>
<evidence type="ECO:0000250" key="1"/>
<evidence type="ECO:0000250" key="2">
    <source>
        <dbReference type="UniProtKB" id="Q62433"/>
    </source>
</evidence>
<evidence type="ECO:0000250" key="3">
    <source>
        <dbReference type="UniProtKB" id="Q6JE36"/>
    </source>
</evidence>
<evidence type="ECO:0000250" key="4">
    <source>
        <dbReference type="UniProtKB" id="Q92597"/>
    </source>
</evidence>
<evidence type="ECO:0000256" key="5">
    <source>
        <dbReference type="SAM" id="MobiDB-lite"/>
    </source>
</evidence>
<evidence type="ECO:0000305" key="6"/>
<comment type="function">
    <text evidence="1">Stress-responsive protein involved in hormone responses, cell growth, and differentiation. Acts as a tumor suppressor in many cell types. Necessary but not sufficient for p53/TP53-mediated caspase activation and apoptosis. Has a role in cell trafficking notably of the Schwann cell and is necessary for the maintenance and development of the peripheral nerve myelin sheath. Required for vesicular recycling of CDH1 and TF. May also function in lipid trafficking. Protects cells from spindle disruption damage. Functions in p53/TP53-dependent mitotic spindle checkpoint. Regulates microtubule dynamics and maintains euploidy (By similarity).</text>
</comment>
<comment type="subunit">
    <text evidence="1">Interacts with RAB4A (membrane-bound form); the interaction involves NDRG1 in vesicular recycling of CDH1. Interacts with APOA1, APOA2, PRA1 and RTN1 (By similarity).</text>
</comment>
<comment type="subcellular location">
    <subcellularLocation>
        <location evidence="1">Cytoplasm</location>
        <location evidence="1">Cytosol</location>
    </subcellularLocation>
    <subcellularLocation>
        <location evidence="1">Cytoplasm</location>
        <location evidence="1">Cytoskeleton</location>
        <location evidence="1">Microtubule organizing center</location>
        <location evidence="1">Centrosome</location>
    </subcellularLocation>
    <subcellularLocation>
        <location evidence="1">Nucleus</location>
    </subcellularLocation>
    <subcellularLocation>
        <location evidence="1">Cell membrane</location>
    </subcellularLocation>
    <text evidence="1">Mainly cytoplasmic but differentially localized to other regions. Associates with the plasma membrane in intestinal epithelia and lactating mammary gland. Translocated to the nucleus in a p53/TP53-dependent manner. In prostate epithelium and placental chorion, located in both the cytoplasm and in the nucleus. No nuclear localization in colon epithelium cells. In intestinal mucosa, prostate and renal cortex, located predominantly adjacent to adherens junctions. Cytoplasmic with granular staining in proximal tubular cells of the kidney and salivary gland ducts. Recruits to the membrane of recycling/sorting and late endosomes via binding to phosphatidylinositol 4-phosphate. Associates with microtubules. Colocalizes with TUBG1 in the centrosome. Cytoplasmic location increased with hypoxia. Phosphorylated form found associated with centromeres during S-phase of mitosis and with the plasma membrane (By similarity).</text>
</comment>
<comment type="PTM">
    <text evidence="1">Under stress conditions, phosphorylated in the C-terminal on many serine and threonine residues. Phosphorylated in vitro by PKA. Phosphorylation enhanced by increased intracellular cAMP levels. Homocysteine induces dephosphorylation. Phosphorylation by SGK1 is cell cycle dependent (By similarity).</text>
</comment>
<comment type="similarity">
    <text evidence="6">Belongs to the NDRG family.</text>
</comment>
<dbReference type="EMBL" id="BC103346">
    <property type="protein sequence ID" value="AAI03347.1"/>
    <property type="molecule type" value="mRNA"/>
</dbReference>
<dbReference type="RefSeq" id="NP_001030181.1">
    <property type="nucleotide sequence ID" value="NM_001035009.2"/>
</dbReference>
<dbReference type="SMR" id="Q3SYX0"/>
<dbReference type="FunCoup" id="Q3SYX0">
    <property type="interactions" value="1451"/>
</dbReference>
<dbReference type="STRING" id="9913.ENSBTAP00000059646"/>
<dbReference type="ESTHER" id="bovin-ndr1">
    <property type="family name" value="Ndr_family"/>
</dbReference>
<dbReference type="MEROPS" id="S33.988"/>
<dbReference type="iPTMnet" id="Q3SYX0"/>
<dbReference type="PaxDb" id="9913-ENSBTAP00000000950"/>
<dbReference type="PeptideAtlas" id="Q3SYX0"/>
<dbReference type="GeneID" id="504499"/>
<dbReference type="KEGG" id="bta:504499"/>
<dbReference type="CTD" id="10397"/>
<dbReference type="eggNOG" id="KOG2931">
    <property type="taxonomic scope" value="Eukaryota"/>
</dbReference>
<dbReference type="InParanoid" id="Q3SYX0"/>
<dbReference type="OrthoDB" id="741027at2759"/>
<dbReference type="Proteomes" id="UP000009136">
    <property type="component" value="Unplaced"/>
</dbReference>
<dbReference type="GO" id="GO:0005813">
    <property type="term" value="C:centrosome"/>
    <property type="evidence" value="ECO:0007669"/>
    <property type="project" value="UniProtKB-SubCell"/>
</dbReference>
<dbReference type="GO" id="GO:0005737">
    <property type="term" value="C:cytoplasm"/>
    <property type="evidence" value="ECO:0000318"/>
    <property type="project" value="GO_Central"/>
</dbReference>
<dbReference type="GO" id="GO:0005829">
    <property type="term" value="C:cytosol"/>
    <property type="evidence" value="ECO:0007669"/>
    <property type="project" value="UniProtKB-SubCell"/>
</dbReference>
<dbReference type="GO" id="GO:0005874">
    <property type="term" value="C:microtubule"/>
    <property type="evidence" value="ECO:0007669"/>
    <property type="project" value="UniProtKB-KW"/>
</dbReference>
<dbReference type="GO" id="GO:0005634">
    <property type="term" value="C:nucleus"/>
    <property type="evidence" value="ECO:0007669"/>
    <property type="project" value="UniProtKB-SubCell"/>
</dbReference>
<dbReference type="GO" id="GO:0005886">
    <property type="term" value="C:plasma membrane"/>
    <property type="evidence" value="ECO:0007669"/>
    <property type="project" value="UniProtKB-SubCell"/>
</dbReference>
<dbReference type="GO" id="GO:0007165">
    <property type="term" value="P:signal transduction"/>
    <property type="evidence" value="ECO:0000318"/>
    <property type="project" value="GO_Central"/>
</dbReference>
<dbReference type="FunFam" id="3.40.50.1820:FF:000006">
    <property type="entry name" value="NDRG family member 3"/>
    <property type="match status" value="1"/>
</dbReference>
<dbReference type="Gene3D" id="3.40.50.1820">
    <property type="entry name" value="alpha/beta hydrolase"/>
    <property type="match status" value="1"/>
</dbReference>
<dbReference type="InterPro" id="IPR029058">
    <property type="entry name" value="AB_hydrolase_fold"/>
</dbReference>
<dbReference type="InterPro" id="IPR004142">
    <property type="entry name" value="NDRG"/>
</dbReference>
<dbReference type="PANTHER" id="PTHR11034">
    <property type="entry name" value="N-MYC DOWNSTREAM REGULATED"/>
    <property type="match status" value="1"/>
</dbReference>
<dbReference type="Pfam" id="PF03096">
    <property type="entry name" value="Ndr"/>
    <property type="match status" value="1"/>
</dbReference>
<dbReference type="SUPFAM" id="SSF53474">
    <property type="entry name" value="alpha/beta-Hydrolases"/>
    <property type="match status" value="1"/>
</dbReference>
<feature type="initiator methionine" description="Removed" evidence="4">
    <location>
        <position position="1"/>
    </location>
</feature>
<feature type="chain" id="PRO_0000270756" description="Protein NDRG1">
    <location>
        <begin position="2"/>
        <end position="384"/>
    </location>
</feature>
<feature type="repeat" description="1">
    <location>
        <begin position="339"/>
        <end position="348"/>
    </location>
</feature>
<feature type="repeat" description="2">
    <location>
        <begin position="349"/>
        <end position="358"/>
    </location>
</feature>
<feature type="region of interest" description="Disordered" evidence="5">
    <location>
        <begin position="325"/>
        <end position="384"/>
    </location>
</feature>
<feature type="region of interest" description="2 X 10 AA tandem repeats of G-[PST]-R-S-R-S-H-T-S-E">
    <location>
        <begin position="339"/>
        <end position="358"/>
    </location>
</feature>
<feature type="compositionally biased region" description="Polar residues" evidence="5">
    <location>
        <begin position="327"/>
        <end position="336"/>
    </location>
</feature>
<feature type="compositionally biased region" description="Basic and acidic residues" evidence="5">
    <location>
        <begin position="345"/>
        <end position="361"/>
    </location>
</feature>
<feature type="compositionally biased region" description="Low complexity" evidence="5">
    <location>
        <begin position="374"/>
        <end position="384"/>
    </location>
</feature>
<feature type="modified residue" description="N-acetylserine" evidence="4">
    <location>
        <position position="2"/>
    </location>
</feature>
<feature type="modified residue" description="Phosphoserine" evidence="4">
    <location>
        <position position="2"/>
    </location>
</feature>
<feature type="modified residue" description="Phosphoserine" evidence="2">
    <location>
        <position position="319"/>
    </location>
</feature>
<feature type="modified residue" description="Phosphoserine" evidence="4">
    <location>
        <position position="326"/>
    </location>
</feature>
<feature type="modified residue" description="Phosphothreonine; by SGK1" evidence="4">
    <location>
        <position position="328"/>
    </location>
</feature>
<feature type="modified residue" description="Phosphoserine; by SGK1" evidence="4">
    <location>
        <position position="330"/>
    </location>
</feature>
<feature type="modified residue" description="Phosphoserine; by SGK1" evidence="4">
    <location>
        <position position="332"/>
    </location>
</feature>
<feature type="modified residue" description="Phosphoserine" evidence="4">
    <location>
        <position position="333"/>
    </location>
</feature>
<feature type="modified residue" description="Phosphothreonine" evidence="2">
    <location>
        <position position="335"/>
    </location>
</feature>
<feature type="modified residue" description="Phosphoserine" evidence="4">
    <location>
        <position position="336"/>
    </location>
</feature>
<feature type="modified residue" description="Phosphoserine" evidence="2">
    <location>
        <position position="342"/>
    </location>
</feature>
<feature type="modified residue" description="Phosphothreonine; by SGK1" evidence="4">
    <location>
        <position position="346"/>
    </location>
</feature>
<feature type="modified residue" description="Phosphoserine" evidence="3">
    <location>
        <position position="352"/>
    </location>
</feature>
<feature type="modified residue" description="Phosphothreonine; by SGK1" evidence="4">
    <location>
        <position position="356"/>
    </location>
</feature>
<reference key="1">
    <citation type="submission" date="2005-08" db="EMBL/GenBank/DDBJ databases">
        <authorList>
            <consortium name="NIH - Mammalian Gene Collection (MGC) project"/>
        </authorList>
    </citation>
    <scope>NUCLEOTIDE SEQUENCE [LARGE SCALE MRNA]</scope>
    <source>
        <strain>Crossbred X Angus</strain>
        <tissue>Ileum</tissue>
    </source>
</reference>
<name>NDRG1_BOVIN</name>
<proteinExistence type="evidence at transcript level"/>
<accession>Q3SYX0</accession>
<keyword id="KW-0007">Acetylation</keyword>
<keyword id="KW-1003">Cell membrane</keyword>
<keyword id="KW-0963">Cytoplasm</keyword>
<keyword id="KW-0206">Cytoskeleton</keyword>
<keyword id="KW-0472">Membrane</keyword>
<keyword id="KW-0493">Microtubule</keyword>
<keyword id="KW-0539">Nucleus</keyword>
<keyword id="KW-0597">Phosphoprotein</keyword>
<keyword id="KW-1185">Reference proteome</keyword>
<keyword id="KW-0677">Repeat</keyword>